<evidence type="ECO:0000255" key="1">
    <source>
        <dbReference type="HAMAP-Rule" id="MF_01302"/>
    </source>
</evidence>
<evidence type="ECO:0000305" key="2"/>
<reference key="1">
    <citation type="journal article" date="2006" name="Nat. Genet.">
        <title>The multidrug-resistant human pathogen Clostridium difficile has a highly mobile, mosaic genome.</title>
        <authorList>
            <person name="Sebaihia M."/>
            <person name="Wren B.W."/>
            <person name="Mullany P."/>
            <person name="Fairweather N.F."/>
            <person name="Minton N."/>
            <person name="Stabler R."/>
            <person name="Thomson N.R."/>
            <person name="Roberts A.P."/>
            <person name="Cerdeno-Tarraga A.M."/>
            <person name="Wang H."/>
            <person name="Holden M.T.G."/>
            <person name="Wright A."/>
            <person name="Churcher C."/>
            <person name="Quail M.A."/>
            <person name="Baker S."/>
            <person name="Bason N."/>
            <person name="Brooks K."/>
            <person name="Chillingworth T."/>
            <person name="Cronin A."/>
            <person name="Davis P."/>
            <person name="Dowd L."/>
            <person name="Fraser A."/>
            <person name="Feltwell T."/>
            <person name="Hance Z."/>
            <person name="Holroyd S."/>
            <person name="Jagels K."/>
            <person name="Moule S."/>
            <person name="Mungall K."/>
            <person name="Price C."/>
            <person name="Rabbinowitsch E."/>
            <person name="Sharp S."/>
            <person name="Simmonds M."/>
            <person name="Stevens K."/>
            <person name="Unwin L."/>
            <person name="Whithead S."/>
            <person name="Dupuy B."/>
            <person name="Dougan G."/>
            <person name="Barrell B."/>
            <person name="Parkhill J."/>
        </authorList>
    </citation>
    <scope>NUCLEOTIDE SEQUENCE [LARGE SCALE GENOMIC DNA]</scope>
    <source>
        <strain>630</strain>
    </source>
</reference>
<keyword id="KW-1185">Reference proteome</keyword>
<keyword id="KW-0687">Ribonucleoprotein</keyword>
<keyword id="KW-0689">Ribosomal protein</keyword>
<keyword id="KW-0694">RNA-binding</keyword>
<keyword id="KW-0699">rRNA-binding</keyword>
<proteinExistence type="inferred from homology"/>
<comment type="function">
    <text evidence="1">One of the primary rRNA binding proteins, it binds directly to 16S rRNA central domain where it helps coordinate assembly of the platform of the 30S subunit.</text>
</comment>
<comment type="subunit">
    <text evidence="1">Part of the 30S ribosomal subunit. Contacts proteins S5 and S12.</text>
</comment>
<comment type="similarity">
    <text evidence="1">Belongs to the universal ribosomal protein uS8 family.</text>
</comment>
<accession>Q18CH0</accession>
<dbReference type="EMBL" id="AM180355">
    <property type="protein sequence ID" value="CAJ66902.1"/>
    <property type="molecule type" value="Genomic_DNA"/>
</dbReference>
<dbReference type="RefSeq" id="WP_003421148.1">
    <property type="nucleotide sequence ID" value="NZ_JAUPES010000043.1"/>
</dbReference>
<dbReference type="RefSeq" id="YP_001086551.1">
    <property type="nucleotide sequence ID" value="NC_009089.1"/>
</dbReference>
<dbReference type="SMR" id="Q18CH0"/>
<dbReference type="STRING" id="272563.CD630_00850"/>
<dbReference type="EnsemblBacteria" id="CAJ66902">
    <property type="protein sequence ID" value="CAJ66902"/>
    <property type="gene ID" value="CD630_00850"/>
</dbReference>
<dbReference type="GeneID" id="66352585"/>
<dbReference type="KEGG" id="cdf:CD630_00850"/>
<dbReference type="KEGG" id="pdc:CDIF630_00153"/>
<dbReference type="PATRIC" id="fig|272563.120.peg.93"/>
<dbReference type="eggNOG" id="COG0096">
    <property type="taxonomic scope" value="Bacteria"/>
</dbReference>
<dbReference type="OrthoDB" id="9802617at2"/>
<dbReference type="PhylomeDB" id="Q18CH0"/>
<dbReference type="BioCyc" id="PDIF272563:G12WB-141-MONOMER"/>
<dbReference type="Proteomes" id="UP000001978">
    <property type="component" value="Chromosome"/>
</dbReference>
<dbReference type="GO" id="GO:1990904">
    <property type="term" value="C:ribonucleoprotein complex"/>
    <property type="evidence" value="ECO:0007669"/>
    <property type="project" value="UniProtKB-KW"/>
</dbReference>
<dbReference type="GO" id="GO:0005840">
    <property type="term" value="C:ribosome"/>
    <property type="evidence" value="ECO:0007669"/>
    <property type="project" value="UniProtKB-KW"/>
</dbReference>
<dbReference type="GO" id="GO:0019843">
    <property type="term" value="F:rRNA binding"/>
    <property type="evidence" value="ECO:0007669"/>
    <property type="project" value="UniProtKB-UniRule"/>
</dbReference>
<dbReference type="GO" id="GO:0003735">
    <property type="term" value="F:structural constituent of ribosome"/>
    <property type="evidence" value="ECO:0007669"/>
    <property type="project" value="InterPro"/>
</dbReference>
<dbReference type="GO" id="GO:0006412">
    <property type="term" value="P:translation"/>
    <property type="evidence" value="ECO:0007669"/>
    <property type="project" value="UniProtKB-UniRule"/>
</dbReference>
<dbReference type="FunFam" id="3.30.1370.30:FF:000002">
    <property type="entry name" value="30S ribosomal protein S8"/>
    <property type="match status" value="1"/>
</dbReference>
<dbReference type="FunFam" id="3.30.1490.10:FF:000001">
    <property type="entry name" value="30S ribosomal protein S8"/>
    <property type="match status" value="1"/>
</dbReference>
<dbReference type="Gene3D" id="3.30.1370.30">
    <property type="match status" value="1"/>
</dbReference>
<dbReference type="Gene3D" id="3.30.1490.10">
    <property type="match status" value="1"/>
</dbReference>
<dbReference type="HAMAP" id="MF_01302_B">
    <property type="entry name" value="Ribosomal_uS8_B"/>
    <property type="match status" value="1"/>
</dbReference>
<dbReference type="InterPro" id="IPR000630">
    <property type="entry name" value="Ribosomal_uS8"/>
</dbReference>
<dbReference type="InterPro" id="IPR047863">
    <property type="entry name" value="Ribosomal_uS8_CS"/>
</dbReference>
<dbReference type="InterPro" id="IPR035987">
    <property type="entry name" value="Ribosomal_uS8_sf"/>
</dbReference>
<dbReference type="NCBIfam" id="NF001109">
    <property type="entry name" value="PRK00136.1"/>
    <property type="match status" value="1"/>
</dbReference>
<dbReference type="PANTHER" id="PTHR11758">
    <property type="entry name" value="40S RIBOSOMAL PROTEIN S15A"/>
    <property type="match status" value="1"/>
</dbReference>
<dbReference type="Pfam" id="PF00410">
    <property type="entry name" value="Ribosomal_S8"/>
    <property type="match status" value="1"/>
</dbReference>
<dbReference type="SUPFAM" id="SSF56047">
    <property type="entry name" value="Ribosomal protein S8"/>
    <property type="match status" value="1"/>
</dbReference>
<dbReference type="PROSITE" id="PS00053">
    <property type="entry name" value="RIBOSOMAL_S8"/>
    <property type="match status" value="1"/>
</dbReference>
<protein>
    <recommendedName>
        <fullName evidence="1">Small ribosomal subunit protein uS8</fullName>
    </recommendedName>
    <alternativeName>
        <fullName evidence="2">30S ribosomal protein S8</fullName>
    </alternativeName>
</protein>
<gene>
    <name evidence="1" type="primary">rpsH</name>
    <name type="ordered locus">CD630_00850</name>
</gene>
<feature type="chain" id="PRO_0000290821" description="Small ribosomal subunit protein uS8">
    <location>
        <begin position="1"/>
        <end position="132"/>
    </location>
</feature>
<name>RS8_CLOD6</name>
<organism>
    <name type="scientific">Clostridioides difficile (strain 630)</name>
    <name type="common">Peptoclostridium difficile</name>
    <dbReference type="NCBI Taxonomy" id="272563"/>
    <lineage>
        <taxon>Bacteria</taxon>
        <taxon>Bacillati</taxon>
        <taxon>Bacillota</taxon>
        <taxon>Clostridia</taxon>
        <taxon>Peptostreptococcales</taxon>
        <taxon>Peptostreptococcaceae</taxon>
        <taxon>Clostridioides</taxon>
    </lineage>
</organism>
<sequence length="132" mass="14680">MTMTDPIADMLTRIRNANVVKHETVDVPASNMKKELARILLEEGFIRGYDVIEDGKQGIIRIQLKYGQEGERVITGLKKISKPGMRVYAANHEIPKVLNGLGISVISTSKGILTDKQARKENVGGEVICYVW</sequence>